<feature type="chain" id="PRO_0000345595" description="Small ribosomal subunit protein bS18c">
    <location>
        <begin position="1"/>
        <end position="94"/>
    </location>
</feature>
<protein>
    <recommendedName>
        <fullName evidence="1">Small ribosomal subunit protein bS18c</fullName>
    </recommendedName>
    <alternativeName>
        <fullName evidence="2">30S ribosomal protein S18, chloroplastic</fullName>
    </alternativeName>
</protein>
<sequence>MDKSKRLFLKSKRSFRRRLPPIQSGDRIDYRNMSLISRFISEQGKILSRRVNRLSLKQQRLITIAIKQARILSSLPFLNNEKQFEKKRVGRYNY</sequence>
<accession>B1NWH2</accession>
<organism>
    <name type="scientific">Manihot esculenta</name>
    <name type="common">Cassava</name>
    <name type="synonym">Jatropha manihot</name>
    <dbReference type="NCBI Taxonomy" id="3983"/>
    <lineage>
        <taxon>Eukaryota</taxon>
        <taxon>Viridiplantae</taxon>
        <taxon>Streptophyta</taxon>
        <taxon>Embryophyta</taxon>
        <taxon>Tracheophyta</taxon>
        <taxon>Spermatophyta</taxon>
        <taxon>Magnoliopsida</taxon>
        <taxon>eudicotyledons</taxon>
        <taxon>Gunneridae</taxon>
        <taxon>Pentapetalae</taxon>
        <taxon>rosids</taxon>
        <taxon>fabids</taxon>
        <taxon>Malpighiales</taxon>
        <taxon>Euphorbiaceae</taxon>
        <taxon>Crotonoideae</taxon>
        <taxon>Manihoteae</taxon>
        <taxon>Manihot</taxon>
    </lineage>
</organism>
<geneLocation type="chloroplast"/>
<reference key="1">
    <citation type="journal article" date="2008" name="Theor. Appl. Genet.">
        <title>The complete nucleotide sequence of the cassava (Manihot esculenta) chloroplast genome and the evolution of atpF in Malpighiales: RNA editing and multiple losses of a group II intron.</title>
        <authorList>
            <person name="Daniell H."/>
            <person name="Wurdack K.J."/>
            <person name="Kanagaraj A."/>
            <person name="Lee S.-B."/>
            <person name="Saski C."/>
            <person name="Jansen R.K."/>
        </authorList>
    </citation>
    <scope>NUCLEOTIDE SEQUENCE [LARGE SCALE GENOMIC DNA]</scope>
    <source>
        <strain>cv. TME3</strain>
    </source>
</reference>
<evidence type="ECO:0000255" key="1">
    <source>
        <dbReference type="HAMAP-Rule" id="MF_00270"/>
    </source>
</evidence>
<evidence type="ECO:0000305" key="2"/>
<gene>
    <name evidence="1" type="primary">rps18</name>
</gene>
<name>RR18_MANES</name>
<keyword id="KW-0150">Chloroplast</keyword>
<keyword id="KW-0934">Plastid</keyword>
<keyword id="KW-0687">Ribonucleoprotein</keyword>
<keyword id="KW-0689">Ribosomal protein</keyword>
<keyword id="KW-0694">RNA-binding</keyword>
<keyword id="KW-0699">rRNA-binding</keyword>
<dbReference type="EMBL" id="EU117376">
    <property type="protein sequence ID" value="ABV66176.1"/>
    <property type="molecule type" value="Genomic_DNA"/>
</dbReference>
<dbReference type="RefSeq" id="YP_001718459.1">
    <property type="nucleotide sequence ID" value="NC_010433.1"/>
</dbReference>
<dbReference type="SMR" id="B1NWH2"/>
<dbReference type="GeneID" id="6000065"/>
<dbReference type="KEGG" id="mesc:6000065"/>
<dbReference type="OrthoDB" id="21463at2759"/>
<dbReference type="GO" id="GO:0009507">
    <property type="term" value="C:chloroplast"/>
    <property type="evidence" value="ECO:0007669"/>
    <property type="project" value="UniProtKB-SubCell"/>
</dbReference>
<dbReference type="GO" id="GO:1990904">
    <property type="term" value="C:ribonucleoprotein complex"/>
    <property type="evidence" value="ECO:0007669"/>
    <property type="project" value="UniProtKB-KW"/>
</dbReference>
<dbReference type="GO" id="GO:0005840">
    <property type="term" value="C:ribosome"/>
    <property type="evidence" value="ECO:0007669"/>
    <property type="project" value="UniProtKB-KW"/>
</dbReference>
<dbReference type="GO" id="GO:0019843">
    <property type="term" value="F:rRNA binding"/>
    <property type="evidence" value="ECO:0007669"/>
    <property type="project" value="UniProtKB-UniRule"/>
</dbReference>
<dbReference type="GO" id="GO:0003735">
    <property type="term" value="F:structural constituent of ribosome"/>
    <property type="evidence" value="ECO:0007669"/>
    <property type="project" value="InterPro"/>
</dbReference>
<dbReference type="GO" id="GO:0006412">
    <property type="term" value="P:translation"/>
    <property type="evidence" value="ECO:0007669"/>
    <property type="project" value="UniProtKB-UniRule"/>
</dbReference>
<dbReference type="FunFam" id="4.10.640.10:FF:000002">
    <property type="entry name" value="30S ribosomal protein S18, chloroplastic"/>
    <property type="match status" value="1"/>
</dbReference>
<dbReference type="Gene3D" id="4.10.640.10">
    <property type="entry name" value="Ribosomal protein S18"/>
    <property type="match status" value="1"/>
</dbReference>
<dbReference type="HAMAP" id="MF_00270">
    <property type="entry name" value="Ribosomal_bS18"/>
    <property type="match status" value="1"/>
</dbReference>
<dbReference type="InterPro" id="IPR001648">
    <property type="entry name" value="Ribosomal_bS18"/>
</dbReference>
<dbReference type="InterPro" id="IPR018275">
    <property type="entry name" value="Ribosomal_bS18_CS"/>
</dbReference>
<dbReference type="InterPro" id="IPR036870">
    <property type="entry name" value="Ribosomal_bS18_sf"/>
</dbReference>
<dbReference type="NCBIfam" id="TIGR00165">
    <property type="entry name" value="S18"/>
    <property type="match status" value="1"/>
</dbReference>
<dbReference type="PANTHER" id="PTHR13479">
    <property type="entry name" value="30S RIBOSOMAL PROTEIN S18"/>
    <property type="match status" value="1"/>
</dbReference>
<dbReference type="PANTHER" id="PTHR13479:SF40">
    <property type="entry name" value="SMALL RIBOSOMAL SUBUNIT PROTEIN BS18M"/>
    <property type="match status" value="1"/>
</dbReference>
<dbReference type="Pfam" id="PF01084">
    <property type="entry name" value="Ribosomal_S18"/>
    <property type="match status" value="1"/>
</dbReference>
<dbReference type="PRINTS" id="PR00974">
    <property type="entry name" value="RIBOSOMALS18"/>
</dbReference>
<dbReference type="SUPFAM" id="SSF46911">
    <property type="entry name" value="Ribosomal protein S18"/>
    <property type="match status" value="1"/>
</dbReference>
<dbReference type="PROSITE" id="PS00057">
    <property type="entry name" value="RIBOSOMAL_S18"/>
    <property type="match status" value="1"/>
</dbReference>
<proteinExistence type="inferred from homology"/>
<comment type="subunit">
    <text evidence="1">Part of the 30S ribosomal subunit.</text>
</comment>
<comment type="subcellular location">
    <subcellularLocation>
        <location>Plastid</location>
        <location>Chloroplast</location>
    </subcellularLocation>
</comment>
<comment type="similarity">
    <text evidence="1">Belongs to the bacterial ribosomal protein bS18 family.</text>
</comment>